<proteinExistence type="inferred from homology"/>
<gene>
    <name evidence="1" type="primary">nuoC</name>
    <name evidence="1" type="synonym">nuoCD</name>
    <name evidence="1" type="synonym">nuoD</name>
    <name type="ordered locus">ABBFA_002860</name>
</gene>
<reference key="1">
    <citation type="journal article" date="2008" name="J. Bacteriol.">
        <title>Comparative genome sequence analysis of multidrug-resistant Acinetobacter baumannii.</title>
        <authorList>
            <person name="Adams M.D."/>
            <person name="Goglin K."/>
            <person name="Molyneaux N."/>
            <person name="Hujer K.M."/>
            <person name="Lavender H."/>
            <person name="Jamison J.J."/>
            <person name="MacDonald I.J."/>
            <person name="Martin K.M."/>
            <person name="Russo T."/>
            <person name="Campagnari A.A."/>
            <person name="Hujer A.M."/>
            <person name="Bonomo R.A."/>
            <person name="Gill S.R."/>
        </authorList>
    </citation>
    <scope>NUCLEOTIDE SEQUENCE [LARGE SCALE GENOMIC DNA]</scope>
    <source>
        <strain>AB307-0294</strain>
    </source>
</reference>
<comment type="function">
    <text evidence="1">NDH-1 shuttles electrons from NADH, via FMN and iron-sulfur (Fe-S) centers, to quinones in the respiratory chain. The immediate electron acceptor for the enzyme in this species is believed to be ubiquinone. Couples the redox reaction to proton translocation (for every two electrons transferred, four hydrogen ions are translocated across the cytoplasmic membrane), and thus conserves the redox energy in a proton gradient.</text>
</comment>
<comment type="catalytic activity">
    <reaction evidence="1">
        <text>a quinone + NADH + 5 H(+)(in) = a quinol + NAD(+) + 4 H(+)(out)</text>
        <dbReference type="Rhea" id="RHEA:57888"/>
        <dbReference type="ChEBI" id="CHEBI:15378"/>
        <dbReference type="ChEBI" id="CHEBI:24646"/>
        <dbReference type="ChEBI" id="CHEBI:57540"/>
        <dbReference type="ChEBI" id="CHEBI:57945"/>
        <dbReference type="ChEBI" id="CHEBI:132124"/>
    </reaction>
</comment>
<comment type="subunit">
    <text evidence="1">NDH-1 is composed of 13 different subunits. Subunits NuoB, CD, E, F, and G constitute the peripheral sector of the complex.</text>
</comment>
<comment type="subcellular location">
    <subcellularLocation>
        <location evidence="1">Cell inner membrane</location>
        <topology evidence="1">Peripheral membrane protein</topology>
        <orientation evidence="1">Cytoplasmic side</orientation>
    </subcellularLocation>
</comment>
<comment type="similarity">
    <text evidence="1">In the N-terminal section; belongs to the complex I 30 kDa subunit family.</text>
</comment>
<comment type="similarity">
    <text evidence="1">In the C-terminal section; belongs to the complex I 49 kDa subunit family.</text>
</comment>
<protein>
    <recommendedName>
        <fullName evidence="1">NADH-quinone oxidoreductase subunit C/D</fullName>
        <ecNumber evidence="1">7.1.1.-</ecNumber>
    </recommendedName>
    <alternativeName>
        <fullName evidence="1">NADH dehydrogenase I subunit C/D</fullName>
    </alternativeName>
    <alternativeName>
        <fullName evidence="1">NDH-1 subunit C/D</fullName>
    </alternativeName>
</protein>
<organism>
    <name type="scientific">Acinetobacter baumannii (strain AB307-0294)</name>
    <dbReference type="NCBI Taxonomy" id="557600"/>
    <lineage>
        <taxon>Bacteria</taxon>
        <taxon>Pseudomonadati</taxon>
        <taxon>Pseudomonadota</taxon>
        <taxon>Gammaproteobacteria</taxon>
        <taxon>Moraxellales</taxon>
        <taxon>Moraxellaceae</taxon>
        <taxon>Acinetobacter</taxon>
        <taxon>Acinetobacter calcoaceticus/baumannii complex</taxon>
    </lineage>
</organism>
<accession>B7GZB9</accession>
<feature type="chain" id="PRO_1000143682" description="NADH-quinone oxidoreductase subunit C/D">
    <location>
        <begin position="1"/>
        <end position="595"/>
    </location>
</feature>
<feature type="region of interest" description="NADH dehydrogenase I subunit C" evidence="1">
    <location>
        <begin position="1"/>
        <end position="186"/>
    </location>
</feature>
<feature type="region of interest" description="NADH dehydrogenase I subunit D" evidence="1">
    <location>
        <begin position="210"/>
        <end position="595"/>
    </location>
</feature>
<keyword id="KW-0997">Cell inner membrane</keyword>
<keyword id="KW-1003">Cell membrane</keyword>
<keyword id="KW-0472">Membrane</keyword>
<keyword id="KW-0511">Multifunctional enzyme</keyword>
<keyword id="KW-0520">NAD</keyword>
<keyword id="KW-0874">Quinone</keyword>
<keyword id="KW-1278">Translocase</keyword>
<keyword id="KW-0813">Transport</keyword>
<keyword id="KW-0830">Ubiquinone</keyword>
<name>NUOCD_ACIB3</name>
<evidence type="ECO:0000255" key="1">
    <source>
        <dbReference type="HAMAP-Rule" id="MF_01359"/>
    </source>
</evidence>
<sequence length="595" mass="68580">MAETDIAMPESTPVDSRPAFAIVEELKTKFGENFYVQATFEEFPTVWVERARVQEVLMFLRKVERPYVMLFDLSAMDERLRQHRDGLPASDFTVFYHLLSLERNSDIRIKVALNENDLNLPTATNIWPNANWYEREAYDMFGINFEGHPMLRRILLPTYWEGHPLRKEYSARATEYTPYMQDKAKQDFEQEHLRFVPEDWGLKRGNADEDFMFLNLGPNHPSAHGAFRIVLQLDGEEVKDCVPDIGYHHRGVEKMAERQTWHSFIPYTDRVDYLGGCAQNMPYVMAVEQLAGIKVPERAQVIRVMLNELFRINNHLLYCGTAIQDAGGMTPVFYMFADRQKVYDIVEAITGYRMHPAWFRIGGTAHDLPNNWQKLVKELLDWMPKRLNEYYTAAFKNSVFIGRTRNVAQYDAKSALAWGVTGTGLRATGIDFDVRKYRPYSGYENFDFEVPVEYEGDAYARVLVHFREIEQSLKIIKQCLDNMPSGPYKADHPLAVPPPKDKTLQDIETLITHFLSVSWGPVMPAGEASFMTEVVKGASTYYLTSDKATMSYRTRIRTPTFTHLQQIPSVINGSLVSDLIIYLATIDVVMADVDR</sequence>
<dbReference type="EC" id="7.1.1.-" evidence="1"/>
<dbReference type="EMBL" id="CP001172">
    <property type="protein sequence ID" value="ACJ57953.1"/>
    <property type="molecule type" value="Genomic_DNA"/>
</dbReference>
<dbReference type="RefSeq" id="WP_000852150.1">
    <property type="nucleotide sequence ID" value="NZ_CP001172.1"/>
</dbReference>
<dbReference type="SMR" id="B7GZB9"/>
<dbReference type="GeneID" id="92892684"/>
<dbReference type="HOGENOM" id="CLU_015134_3_2_6"/>
<dbReference type="Proteomes" id="UP000006924">
    <property type="component" value="Chromosome"/>
</dbReference>
<dbReference type="GO" id="GO:0030964">
    <property type="term" value="C:NADH dehydrogenase complex"/>
    <property type="evidence" value="ECO:0007669"/>
    <property type="project" value="InterPro"/>
</dbReference>
<dbReference type="GO" id="GO:0005886">
    <property type="term" value="C:plasma membrane"/>
    <property type="evidence" value="ECO:0007669"/>
    <property type="project" value="UniProtKB-SubCell"/>
</dbReference>
<dbReference type="GO" id="GO:0051287">
    <property type="term" value="F:NAD binding"/>
    <property type="evidence" value="ECO:0007669"/>
    <property type="project" value="InterPro"/>
</dbReference>
<dbReference type="GO" id="GO:0008137">
    <property type="term" value="F:NADH dehydrogenase (ubiquinone) activity"/>
    <property type="evidence" value="ECO:0007669"/>
    <property type="project" value="InterPro"/>
</dbReference>
<dbReference type="GO" id="GO:0050136">
    <property type="term" value="F:NADH:ubiquinone reductase (non-electrogenic) activity"/>
    <property type="evidence" value="ECO:0007669"/>
    <property type="project" value="UniProtKB-UniRule"/>
</dbReference>
<dbReference type="GO" id="GO:0048038">
    <property type="term" value="F:quinone binding"/>
    <property type="evidence" value="ECO:0007669"/>
    <property type="project" value="UniProtKB-KW"/>
</dbReference>
<dbReference type="FunFam" id="1.10.645.10:FF:000001">
    <property type="entry name" value="NADH-quinone oxidoreductase subunit C/D"/>
    <property type="match status" value="1"/>
</dbReference>
<dbReference type="Gene3D" id="1.10.645.10">
    <property type="entry name" value="Cytochrome-c3 Hydrogenase, chain B"/>
    <property type="match status" value="1"/>
</dbReference>
<dbReference type="Gene3D" id="3.30.460.80">
    <property type="entry name" value="NADH:ubiquinone oxidoreductase, 30kDa subunit"/>
    <property type="match status" value="1"/>
</dbReference>
<dbReference type="HAMAP" id="MF_01357">
    <property type="entry name" value="NDH1_NuoC"/>
    <property type="match status" value="1"/>
</dbReference>
<dbReference type="HAMAP" id="MF_01359">
    <property type="entry name" value="NDH1_NuoCD_1"/>
    <property type="match status" value="1"/>
</dbReference>
<dbReference type="HAMAP" id="MF_01358">
    <property type="entry name" value="NDH1_NuoD"/>
    <property type="match status" value="1"/>
</dbReference>
<dbReference type="InterPro" id="IPR010218">
    <property type="entry name" value="NADH_DH_suC"/>
</dbReference>
<dbReference type="InterPro" id="IPR023062">
    <property type="entry name" value="NADH_DH_suCD"/>
</dbReference>
<dbReference type="InterPro" id="IPR001135">
    <property type="entry name" value="NADH_Q_OxRdtase_suD"/>
</dbReference>
<dbReference type="InterPro" id="IPR037232">
    <property type="entry name" value="NADH_quin_OxRdtase_su_C/D-like"/>
</dbReference>
<dbReference type="InterPro" id="IPR001268">
    <property type="entry name" value="NADH_UbQ_OxRdtase_30kDa_su"/>
</dbReference>
<dbReference type="InterPro" id="IPR014029">
    <property type="entry name" value="NADH_UbQ_OxRdtase_49kDa_CS"/>
</dbReference>
<dbReference type="InterPro" id="IPR020396">
    <property type="entry name" value="NADH_UbQ_OxRdtase_CS"/>
</dbReference>
<dbReference type="InterPro" id="IPR022885">
    <property type="entry name" value="NDH1_su_D/H"/>
</dbReference>
<dbReference type="InterPro" id="IPR029014">
    <property type="entry name" value="NiFe-Hase_large"/>
</dbReference>
<dbReference type="NCBIfam" id="TIGR01961">
    <property type="entry name" value="NuoC_fam"/>
    <property type="match status" value="1"/>
</dbReference>
<dbReference type="NCBIfam" id="TIGR01962">
    <property type="entry name" value="NuoD"/>
    <property type="match status" value="1"/>
</dbReference>
<dbReference type="NCBIfam" id="NF004739">
    <property type="entry name" value="PRK06075.1"/>
    <property type="match status" value="1"/>
</dbReference>
<dbReference type="NCBIfam" id="NF008728">
    <property type="entry name" value="PRK11742.1"/>
    <property type="match status" value="1"/>
</dbReference>
<dbReference type="PANTHER" id="PTHR11993:SF45">
    <property type="entry name" value="NADH-QUINONE OXIDOREDUCTASE SUBUNIT C_D"/>
    <property type="match status" value="1"/>
</dbReference>
<dbReference type="PANTHER" id="PTHR11993">
    <property type="entry name" value="NADH-UBIQUINONE OXIDOREDUCTASE 49 KDA SUBUNIT"/>
    <property type="match status" value="1"/>
</dbReference>
<dbReference type="Pfam" id="PF00329">
    <property type="entry name" value="Complex1_30kDa"/>
    <property type="match status" value="1"/>
</dbReference>
<dbReference type="Pfam" id="PF00346">
    <property type="entry name" value="Complex1_49kDa"/>
    <property type="match status" value="1"/>
</dbReference>
<dbReference type="SUPFAM" id="SSF56762">
    <property type="entry name" value="HydB/Nqo4-like"/>
    <property type="match status" value="1"/>
</dbReference>
<dbReference type="SUPFAM" id="SSF143243">
    <property type="entry name" value="Nqo5-like"/>
    <property type="match status" value="1"/>
</dbReference>
<dbReference type="PROSITE" id="PS00542">
    <property type="entry name" value="COMPLEX1_30K"/>
    <property type="match status" value="1"/>
</dbReference>
<dbReference type="PROSITE" id="PS00535">
    <property type="entry name" value="COMPLEX1_49K"/>
    <property type="match status" value="1"/>
</dbReference>